<proteinExistence type="inferred from homology"/>
<dbReference type="EMBL" id="U39874">
    <property type="protein sequence ID" value="AAD10280.1"/>
    <property type="molecule type" value="Genomic_DNA"/>
</dbReference>
<dbReference type="SMR" id="P0C179"/>
<dbReference type="GO" id="GO:0009512">
    <property type="term" value="C:cytochrome b6f complex"/>
    <property type="evidence" value="ECO:0007669"/>
    <property type="project" value="InterPro"/>
</dbReference>
<dbReference type="GO" id="GO:0031676">
    <property type="term" value="C:plasma membrane-derived thylakoid membrane"/>
    <property type="evidence" value="ECO:0007669"/>
    <property type="project" value="UniProtKB-SubCell"/>
</dbReference>
<dbReference type="GO" id="GO:0045158">
    <property type="term" value="F:electron transporter, transferring electrons within cytochrome b6/f complex of photosystem II activity"/>
    <property type="evidence" value="ECO:0007669"/>
    <property type="project" value="UniProtKB-UniRule"/>
</dbReference>
<dbReference type="GO" id="GO:0017004">
    <property type="term" value="P:cytochrome complex assembly"/>
    <property type="evidence" value="ECO:0007669"/>
    <property type="project" value="UniProtKB-UniRule"/>
</dbReference>
<dbReference type="GO" id="GO:0015979">
    <property type="term" value="P:photosynthesis"/>
    <property type="evidence" value="ECO:0007669"/>
    <property type="project" value="UniProtKB-KW"/>
</dbReference>
<dbReference type="HAMAP" id="MF_00432">
    <property type="entry name" value="Cytb6_f_PetG"/>
    <property type="match status" value="1"/>
</dbReference>
<dbReference type="InterPro" id="IPR003683">
    <property type="entry name" value="Cyt_6/f_cplx_su5"/>
</dbReference>
<dbReference type="InterPro" id="IPR036099">
    <property type="entry name" value="Cyt_6/f_cplx_su5_sf"/>
</dbReference>
<dbReference type="NCBIfam" id="NF001907">
    <property type="entry name" value="PRK00665.1"/>
    <property type="match status" value="1"/>
</dbReference>
<dbReference type="Pfam" id="PF02529">
    <property type="entry name" value="PetG"/>
    <property type="match status" value="1"/>
</dbReference>
<dbReference type="PIRSF" id="PIRSF000034">
    <property type="entry name" value="Cyt_b6-f_V"/>
    <property type="match status" value="1"/>
</dbReference>
<dbReference type="SUPFAM" id="SSF103446">
    <property type="entry name" value="PetG subunit of the cytochrome b6f complex"/>
    <property type="match status" value="1"/>
</dbReference>
<protein>
    <recommendedName>
        <fullName evidence="1">Cytochrome b6-f complex subunit 5</fullName>
    </recommendedName>
    <alternativeName>
        <fullName evidence="1">Cytochrome b6-f complex subunit PetG</fullName>
    </alternativeName>
    <alternativeName>
        <fullName evidence="1">Cytochrome b6-f complex subunit V</fullName>
    </alternativeName>
</protein>
<sequence>MVEPLLSGIVLGLIVVTLAGLFYAAYKQYKRPNELGG</sequence>
<gene>
    <name evidence="1" type="primary">petG</name>
</gene>
<reference key="1">
    <citation type="submission" date="1995-11" db="EMBL/GenBank/DDBJ databases">
        <authorList>
            <person name="Malakhov M.P."/>
            <person name="Murata N."/>
        </authorList>
    </citation>
    <scope>NUCLEOTIDE SEQUENCE [GENOMIC DNA]</scope>
    <source>
        <strain>M3</strain>
    </source>
</reference>
<evidence type="ECO:0000255" key="1">
    <source>
        <dbReference type="HAMAP-Rule" id="MF_00432"/>
    </source>
</evidence>
<feature type="chain" id="PRO_0000228716" description="Cytochrome b6-f complex subunit 5">
    <location>
        <begin position="1"/>
        <end position="37"/>
    </location>
</feature>
<feature type="transmembrane region" description="Helical" evidence="1">
    <location>
        <begin position="5"/>
        <end position="25"/>
    </location>
</feature>
<name>PETG_ANAVA</name>
<accession>P0C179</accession>
<accession>Q9L3P7</accession>
<accession>Q9ZB69</accession>
<organism>
    <name type="scientific">Anabaena variabilis</name>
    <dbReference type="NCBI Taxonomy" id="264691"/>
    <lineage>
        <taxon>Bacteria</taxon>
        <taxon>Bacillati</taxon>
        <taxon>Cyanobacteriota</taxon>
        <taxon>Cyanophyceae</taxon>
        <taxon>Nostocales</taxon>
        <taxon>Nostocaceae</taxon>
        <taxon>Trichormus</taxon>
    </lineage>
</organism>
<comment type="function">
    <text evidence="1">Component of the cytochrome b6-f complex, which mediates electron transfer between photosystem II (PSII) and photosystem I (PSI), cyclic electron flow around PSI, and state transitions. PetG is required for either the stability or assembly of the cytochrome b6-f complex.</text>
</comment>
<comment type="subunit">
    <text evidence="1">The 4 large subunits of the cytochrome b6-f complex are cytochrome b6, subunit IV (17 kDa polypeptide, PetD), cytochrome f and the Rieske protein, while the 4 small subunits are PetG, PetL, PetM and PetN. The complex functions as a dimer.</text>
</comment>
<comment type="subcellular location">
    <subcellularLocation>
        <location evidence="1">Cellular thylakoid membrane</location>
        <topology evidence="1">Single-pass membrane protein</topology>
    </subcellularLocation>
</comment>
<comment type="similarity">
    <text evidence="1">Belongs to the PetG family.</text>
</comment>
<keyword id="KW-0249">Electron transport</keyword>
<keyword id="KW-0472">Membrane</keyword>
<keyword id="KW-0602">Photosynthesis</keyword>
<keyword id="KW-0793">Thylakoid</keyword>
<keyword id="KW-0812">Transmembrane</keyword>
<keyword id="KW-1133">Transmembrane helix</keyword>
<keyword id="KW-0813">Transport</keyword>